<feature type="propeptide" id="PRO_0000397466" description="Removed in mature form; by autocatalysis" evidence="1">
    <location>
        <begin position="1"/>
        <end position="10"/>
    </location>
</feature>
<feature type="chain" id="PRO_0000397467" description="Proteasome subunit beta 1">
    <location>
        <begin position="11"/>
        <end position="201"/>
    </location>
</feature>
<feature type="active site" description="Nucleophile" evidence="1">
    <location>
        <position position="11"/>
    </location>
</feature>
<comment type="function">
    <text evidence="1">Component of the proteasome core, a large protease complex with broad specificity involved in protein degradation.</text>
</comment>
<comment type="catalytic activity">
    <reaction evidence="1">
        <text>Cleavage of peptide bonds with very broad specificity.</text>
        <dbReference type="EC" id="3.4.25.1"/>
    </reaction>
</comment>
<comment type="activity regulation">
    <text evidence="1">The formation of the proteasomal ATPase PAN-20S proteasome complex, via the docking of the C-termini of PAN into the intersubunit pockets in the alpha-rings, triggers opening of the gate for substrate entry. Interconversion between the open-gate and close-gate conformations leads to a dynamic regulation of the 20S proteasome proteolysis activity.</text>
</comment>
<comment type="subunit">
    <text evidence="1">The 20S proteasome core is composed of 14 alpha and 14 beta subunits that assemble into four stacked heptameric rings, resulting in a barrel-shaped structure. The two inner rings, each composed of seven catalytic beta subunits, are sandwiched by two outer rings, each composed of seven alpha subunits. The catalytic chamber with the active sites is on the inside of the barrel. Has a gated structure, the ends of the cylinder being occluded by the N-termini of the alpha-subunits. Is capped at one or both ends by the proteasome regulatory ATPase, PAN.</text>
</comment>
<comment type="subcellular location">
    <subcellularLocation>
        <location evidence="1">Cytoplasm</location>
    </subcellularLocation>
</comment>
<comment type="similarity">
    <text evidence="1">Belongs to the peptidase T1B family.</text>
</comment>
<keyword id="KW-0068">Autocatalytic cleavage</keyword>
<keyword id="KW-0963">Cytoplasm</keyword>
<keyword id="KW-0378">Hydrolase</keyword>
<keyword id="KW-0645">Protease</keyword>
<keyword id="KW-0647">Proteasome</keyword>
<keyword id="KW-1185">Reference proteome</keyword>
<keyword id="KW-0888">Threonine protease</keyword>
<keyword id="KW-0865">Zymogen</keyword>
<sequence length="201" mass="21486">MNGSPSAMKGTTTVGVVCRDGVVLAADRRATLGNMVTSKEVTKVFQIDDHLAIAGAGLVGDILSLVRLLRAEAKLYRAKVGREMSVKALATLVSNVLHGSRHLPYFAWFLIGGYDVKPRLYSIDAAGGVTEERFIAAGSGMEFALALLEENFSDGMGLDEGIDLAVRAVKAAIRRDVYTGEGVTVVAITKEGYRELEPVLK</sequence>
<proteinExistence type="inferred from homology"/>
<organism>
    <name type="scientific">Thermococcus gammatolerans (strain DSM 15229 / JCM 11827 / EJ3)</name>
    <dbReference type="NCBI Taxonomy" id="593117"/>
    <lineage>
        <taxon>Archaea</taxon>
        <taxon>Methanobacteriati</taxon>
        <taxon>Methanobacteriota</taxon>
        <taxon>Thermococci</taxon>
        <taxon>Thermococcales</taxon>
        <taxon>Thermococcaceae</taxon>
        <taxon>Thermococcus</taxon>
    </lineage>
</organism>
<evidence type="ECO:0000255" key="1">
    <source>
        <dbReference type="HAMAP-Rule" id="MF_02113"/>
    </source>
</evidence>
<reference key="1">
    <citation type="journal article" date="2007" name="Genome Biol.">
        <title>Genome analysis and genome-wide proteomics of Thermococcus gammatolerans, the most radioresistant organism known amongst the Archaea.</title>
        <authorList>
            <person name="Zivanovic Y."/>
            <person name="Armengaud J."/>
            <person name="Lagorce A."/>
            <person name="Leplat C."/>
            <person name="Guerin P."/>
            <person name="Dutertre M."/>
            <person name="Anthouard V."/>
            <person name="Forterre P."/>
            <person name="Wincker P."/>
            <person name="Confalonieri F."/>
        </authorList>
    </citation>
    <scope>NUCLEOTIDE SEQUENCE [LARGE SCALE GENOMIC DNA]</scope>
    <source>
        <strain>DSM 15229 / JCM 11827 / EJ3</strain>
    </source>
</reference>
<gene>
    <name evidence="1" type="primary">psmB1</name>
    <name type="synonym">psmB-1</name>
    <name type="ordered locus">TGAM_1721</name>
</gene>
<protein>
    <recommendedName>
        <fullName evidence="1">Proteasome subunit beta 1</fullName>
        <ecNumber evidence="1">3.4.25.1</ecNumber>
    </recommendedName>
    <alternativeName>
        <fullName evidence="1">20S proteasome beta subunit 1</fullName>
    </alternativeName>
    <alternativeName>
        <fullName evidence="1">Proteasome core protein PsmB 1</fullName>
    </alternativeName>
</protein>
<accession>C5A7L1</accession>
<dbReference type="EC" id="3.4.25.1" evidence="1"/>
<dbReference type="EMBL" id="CP001398">
    <property type="protein sequence ID" value="ACS34223.1"/>
    <property type="molecule type" value="Genomic_DNA"/>
</dbReference>
<dbReference type="SMR" id="C5A7L1"/>
<dbReference type="STRING" id="593117.TGAM_1721"/>
<dbReference type="MEROPS" id="T01.002"/>
<dbReference type="PaxDb" id="593117-TGAM_1721"/>
<dbReference type="KEGG" id="tga:TGAM_1721"/>
<dbReference type="PATRIC" id="fig|593117.10.peg.1728"/>
<dbReference type="eggNOG" id="arCOG00970">
    <property type="taxonomic scope" value="Archaea"/>
</dbReference>
<dbReference type="HOGENOM" id="CLU_035750_7_2_2"/>
<dbReference type="Proteomes" id="UP000001488">
    <property type="component" value="Chromosome"/>
</dbReference>
<dbReference type="GO" id="GO:0005737">
    <property type="term" value="C:cytoplasm"/>
    <property type="evidence" value="ECO:0007669"/>
    <property type="project" value="UniProtKB-SubCell"/>
</dbReference>
<dbReference type="GO" id="GO:0019774">
    <property type="term" value="C:proteasome core complex, beta-subunit complex"/>
    <property type="evidence" value="ECO:0007669"/>
    <property type="project" value="UniProtKB-UniRule"/>
</dbReference>
<dbReference type="GO" id="GO:0004298">
    <property type="term" value="F:threonine-type endopeptidase activity"/>
    <property type="evidence" value="ECO:0007669"/>
    <property type="project" value="UniProtKB-UniRule"/>
</dbReference>
<dbReference type="GO" id="GO:0010498">
    <property type="term" value="P:proteasomal protein catabolic process"/>
    <property type="evidence" value="ECO:0007669"/>
    <property type="project" value="UniProtKB-UniRule"/>
</dbReference>
<dbReference type="FunFam" id="3.60.20.10:FF:000049">
    <property type="entry name" value="Proteasome subunit beta"/>
    <property type="match status" value="1"/>
</dbReference>
<dbReference type="Gene3D" id="3.60.20.10">
    <property type="entry name" value="Glutamine Phosphoribosylpyrophosphate, subunit 1, domain 1"/>
    <property type="match status" value="1"/>
</dbReference>
<dbReference type="HAMAP" id="MF_02113_A">
    <property type="entry name" value="Proteasome_B_A"/>
    <property type="match status" value="1"/>
</dbReference>
<dbReference type="InterPro" id="IPR029055">
    <property type="entry name" value="Ntn_hydrolases_N"/>
</dbReference>
<dbReference type="InterPro" id="IPR019983">
    <property type="entry name" value="Pept_T1A_Psome_bsu_arc"/>
</dbReference>
<dbReference type="InterPro" id="IPR000243">
    <property type="entry name" value="Pept_T1A_subB"/>
</dbReference>
<dbReference type="InterPro" id="IPR016050">
    <property type="entry name" value="Proteasome_bsu_CS"/>
</dbReference>
<dbReference type="InterPro" id="IPR001353">
    <property type="entry name" value="Proteasome_sua/b"/>
</dbReference>
<dbReference type="InterPro" id="IPR023333">
    <property type="entry name" value="Proteasome_suB-type"/>
</dbReference>
<dbReference type="NCBIfam" id="TIGR03634">
    <property type="entry name" value="arc_protsome_B"/>
    <property type="match status" value="1"/>
</dbReference>
<dbReference type="PANTHER" id="PTHR32194:SF0">
    <property type="entry name" value="ATP-DEPENDENT PROTEASE SUBUNIT HSLV"/>
    <property type="match status" value="1"/>
</dbReference>
<dbReference type="PANTHER" id="PTHR32194">
    <property type="entry name" value="METALLOPROTEASE TLDD"/>
    <property type="match status" value="1"/>
</dbReference>
<dbReference type="Pfam" id="PF00227">
    <property type="entry name" value="Proteasome"/>
    <property type="match status" value="1"/>
</dbReference>
<dbReference type="PRINTS" id="PR00141">
    <property type="entry name" value="PROTEASOME"/>
</dbReference>
<dbReference type="SUPFAM" id="SSF56235">
    <property type="entry name" value="N-terminal nucleophile aminohydrolases (Ntn hydrolases)"/>
    <property type="match status" value="1"/>
</dbReference>
<dbReference type="PROSITE" id="PS00854">
    <property type="entry name" value="PROTEASOME_BETA_1"/>
    <property type="match status" value="1"/>
</dbReference>
<dbReference type="PROSITE" id="PS51476">
    <property type="entry name" value="PROTEASOME_BETA_2"/>
    <property type="match status" value="1"/>
</dbReference>
<name>PSB1_THEGJ</name>